<dbReference type="EMBL" id="CP000408">
    <property type="protein sequence ID" value="ABP91244.1"/>
    <property type="molecule type" value="Genomic_DNA"/>
</dbReference>
<dbReference type="SMR" id="A4VYQ5"/>
<dbReference type="KEGG" id="ssv:SSU98_0084"/>
<dbReference type="HOGENOM" id="CLU_061015_2_1_9"/>
<dbReference type="GO" id="GO:1990904">
    <property type="term" value="C:ribonucleoprotein complex"/>
    <property type="evidence" value="ECO:0007669"/>
    <property type="project" value="UniProtKB-KW"/>
</dbReference>
<dbReference type="GO" id="GO:0005840">
    <property type="term" value="C:ribosome"/>
    <property type="evidence" value="ECO:0007669"/>
    <property type="project" value="UniProtKB-KW"/>
</dbReference>
<dbReference type="GO" id="GO:0019843">
    <property type="term" value="F:rRNA binding"/>
    <property type="evidence" value="ECO:0007669"/>
    <property type="project" value="UniProtKB-UniRule"/>
</dbReference>
<dbReference type="GO" id="GO:0003735">
    <property type="term" value="F:structural constituent of ribosome"/>
    <property type="evidence" value="ECO:0007669"/>
    <property type="project" value="InterPro"/>
</dbReference>
<dbReference type="GO" id="GO:0000049">
    <property type="term" value="F:tRNA binding"/>
    <property type="evidence" value="ECO:0007669"/>
    <property type="project" value="UniProtKB-UniRule"/>
</dbReference>
<dbReference type="GO" id="GO:0006412">
    <property type="term" value="P:translation"/>
    <property type="evidence" value="ECO:0007669"/>
    <property type="project" value="UniProtKB-UniRule"/>
</dbReference>
<dbReference type="FunFam" id="3.30.1440.10:FF:000001">
    <property type="entry name" value="50S ribosomal protein L5"/>
    <property type="match status" value="1"/>
</dbReference>
<dbReference type="Gene3D" id="3.30.1440.10">
    <property type="match status" value="1"/>
</dbReference>
<dbReference type="HAMAP" id="MF_01333_B">
    <property type="entry name" value="Ribosomal_uL5_B"/>
    <property type="match status" value="1"/>
</dbReference>
<dbReference type="InterPro" id="IPR002132">
    <property type="entry name" value="Ribosomal_uL5"/>
</dbReference>
<dbReference type="InterPro" id="IPR020930">
    <property type="entry name" value="Ribosomal_uL5_bac-type"/>
</dbReference>
<dbReference type="InterPro" id="IPR031309">
    <property type="entry name" value="Ribosomal_uL5_C"/>
</dbReference>
<dbReference type="InterPro" id="IPR020929">
    <property type="entry name" value="Ribosomal_uL5_CS"/>
</dbReference>
<dbReference type="InterPro" id="IPR022803">
    <property type="entry name" value="Ribosomal_uL5_dom_sf"/>
</dbReference>
<dbReference type="InterPro" id="IPR031310">
    <property type="entry name" value="Ribosomal_uL5_N"/>
</dbReference>
<dbReference type="NCBIfam" id="NF000585">
    <property type="entry name" value="PRK00010.1"/>
    <property type="match status" value="1"/>
</dbReference>
<dbReference type="PANTHER" id="PTHR11994">
    <property type="entry name" value="60S RIBOSOMAL PROTEIN L11-RELATED"/>
    <property type="match status" value="1"/>
</dbReference>
<dbReference type="Pfam" id="PF00281">
    <property type="entry name" value="Ribosomal_L5"/>
    <property type="match status" value="1"/>
</dbReference>
<dbReference type="Pfam" id="PF00673">
    <property type="entry name" value="Ribosomal_L5_C"/>
    <property type="match status" value="1"/>
</dbReference>
<dbReference type="PIRSF" id="PIRSF002161">
    <property type="entry name" value="Ribosomal_L5"/>
    <property type="match status" value="1"/>
</dbReference>
<dbReference type="SUPFAM" id="SSF55282">
    <property type="entry name" value="RL5-like"/>
    <property type="match status" value="1"/>
</dbReference>
<dbReference type="PROSITE" id="PS00358">
    <property type="entry name" value="RIBOSOMAL_L5"/>
    <property type="match status" value="1"/>
</dbReference>
<feature type="chain" id="PRO_1000052844" description="Large ribosomal subunit protein uL5">
    <location>
        <begin position="1"/>
        <end position="180"/>
    </location>
</feature>
<sequence>MANRLKEKYLNEVVPALTEQFNYSSVMAVPKVDKIVLNMGVGDAVSNAKNLEKAAQELALISGQKPLITKAKKSIAGFRLREGVAIGAKVTLRGERMYEFLDKLVTVSLPRVRDFHGVPTKSFDGRGNYTLGVKEQLIFPEINFDDVDKTRGMDIVIVTTANTDEESRALLTGLGMPFAK</sequence>
<evidence type="ECO:0000255" key="1">
    <source>
        <dbReference type="HAMAP-Rule" id="MF_01333"/>
    </source>
</evidence>
<evidence type="ECO:0000305" key="2"/>
<gene>
    <name evidence="1" type="primary">rplE</name>
    <name type="ordered locus">SSU98_0084</name>
</gene>
<proteinExistence type="inferred from homology"/>
<organism>
    <name type="scientific">Streptococcus suis (strain 98HAH33)</name>
    <dbReference type="NCBI Taxonomy" id="391296"/>
    <lineage>
        <taxon>Bacteria</taxon>
        <taxon>Bacillati</taxon>
        <taxon>Bacillota</taxon>
        <taxon>Bacilli</taxon>
        <taxon>Lactobacillales</taxon>
        <taxon>Streptococcaceae</taxon>
        <taxon>Streptococcus</taxon>
    </lineage>
</organism>
<protein>
    <recommendedName>
        <fullName evidence="1">Large ribosomal subunit protein uL5</fullName>
    </recommendedName>
    <alternativeName>
        <fullName evidence="2">50S ribosomal protein L5</fullName>
    </alternativeName>
</protein>
<comment type="function">
    <text evidence="1">This is one of the proteins that bind and probably mediate the attachment of the 5S RNA into the large ribosomal subunit, where it forms part of the central protuberance. In the 70S ribosome it contacts protein S13 of the 30S subunit (bridge B1b), connecting the 2 subunits; this bridge is implicated in subunit movement. Contacts the P site tRNA; the 5S rRNA and some of its associated proteins might help stabilize positioning of ribosome-bound tRNAs.</text>
</comment>
<comment type="subunit">
    <text evidence="1">Part of the 50S ribosomal subunit; part of the 5S rRNA/L5/L18/L25 subcomplex. Contacts the 5S rRNA and the P site tRNA. Forms a bridge to the 30S subunit in the 70S ribosome.</text>
</comment>
<comment type="similarity">
    <text evidence="1">Belongs to the universal ribosomal protein uL5 family.</text>
</comment>
<name>RL5_STRS2</name>
<reference key="1">
    <citation type="journal article" date="2007" name="PLoS ONE">
        <title>A glimpse of streptococcal toxic shock syndrome from comparative genomics of S. suis 2 Chinese isolates.</title>
        <authorList>
            <person name="Chen C."/>
            <person name="Tang J."/>
            <person name="Dong W."/>
            <person name="Wang C."/>
            <person name="Feng Y."/>
            <person name="Wang J."/>
            <person name="Zheng F."/>
            <person name="Pan X."/>
            <person name="Liu D."/>
            <person name="Li M."/>
            <person name="Song Y."/>
            <person name="Zhu X."/>
            <person name="Sun H."/>
            <person name="Feng T."/>
            <person name="Guo Z."/>
            <person name="Ju A."/>
            <person name="Ge J."/>
            <person name="Dong Y."/>
            <person name="Sun W."/>
            <person name="Jiang Y."/>
            <person name="Wang J."/>
            <person name="Yan J."/>
            <person name="Yang H."/>
            <person name="Wang X."/>
            <person name="Gao G.F."/>
            <person name="Yang R."/>
            <person name="Wang J."/>
            <person name="Yu J."/>
        </authorList>
    </citation>
    <scope>NUCLEOTIDE SEQUENCE [LARGE SCALE GENOMIC DNA]</scope>
    <source>
        <strain>98HAH33</strain>
    </source>
</reference>
<accession>A4VYQ5</accession>
<keyword id="KW-0687">Ribonucleoprotein</keyword>
<keyword id="KW-0689">Ribosomal protein</keyword>
<keyword id="KW-0694">RNA-binding</keyword>
<keyword id="KW-0699">rRNA-binding</keyword>
<keyword id="KW-0820">tRNA-binding</keyword>